<sequence length="665" mass="75334">GVGRAAAAAAAVAVPLAGGQEGSPGGGRRGSRGTTMVKKRKGRVVIDSDTEDSGSDENLDQELPSLAKRKRSDSEEKEPPVSQPAASSDSETSDSDDEWTFGSNKNKKKGKARKIEKKGTMKKQANKTASSGSSDKDSSAESSAPEEGEVSDSDSNSSSSSSDSDSSSEDEEFHDGYGEDLMGDEEDRARLEQMTEKEREQELFNRIEKREVLKRRFEIKKKLKTAKKKEKKEKKKKQEEEQEKKKLTQIQESQVTSHNKERRSKRDEKLDKKSQAMEELKAEREKRKNRTVELLAKKQPLKTSEVYSDDEEEEEDDKSSEKSDRSSRTSSSDEEEEKEEIPPKSQPVSLPEELNRVRLSRHKLERWCHMPFFAKTVTGCFVRIGIGNHNSKPVYRVAEITGVVETAKVYQLGGTRTNKGLQLRHGNDQRVFRLEFVSNQEFTESEFMKWKEAMFSAGMQLPTLDEINKKELSIKEALNYKFNDQDIEEIVKEKERFRKAPPNYAMKKTQLLKEKAMAEDLGDQDKAKQIQDQLNELEERAEALDRQRTKNISAISYINQRNREWNIVESEKALVAESHNMKNQQMDPFTRRQCKPTIVSNSRDPAVQAAILAQLNAKYGSGVLPDAPKEMSKGQGKDKDLNSKSASDLSEDLFKVHDFDVKIDL</sequence>
<proteinExistence type="evidence at transcript level"/>
<organism>
    <name type="scientific">Pongo abelii</name>
    <name type="common">Sumatran orangutan</name>
    <name type="synonym">Pongo pygmaeus abelii</name>
    <dbReference type="NCBI Taxonomy" id="9601"/>
    <lineage>
        <taxon>Eukaryota</taxon>
        <taxon>Metazoa</taxon>
        <taxon>Chordata</taxon>
        <taxon>Craniata</taxon>
        <taxon>Vertebrata</taxon>
        <taxon>Euteleostomi</taxon>
        <taxon>Mammalia</taxon>
        <taxon>Eutheria</taxon>
        <taxon>Euarchontoglires</taxon>
        <taxon>Primates</taxon>
        <taxon>Haplorrhini</taxon>
        <taxon>Catarrhini</taxon>
        <taxon>Hominidae</taxon>
        <taxon>Pongo</taxon>
    </lineage>
</organism>
<keyword id="KW-0010">Activator</keyword>
<keyword id="KW-0175">Coiled coil</keyword>
<keyword id="KW-0238">DNA-binding</keyword>
<keyword id="KW-0539">Nucleus</keyword>
<keyword id="KW-0597">Phosphoprotein</keyword>
<keyword id="KW-1185">Reference proteome</keyword>
<keyword id="KW-0804">Transcription</keyword>
<keyword id="KW-0805">Transcription regulation</keyword>
<keyword id="KW-0879">Wnt signaling pathway</keyword>
<reference key="1">
    <citation type="submission" date="2004-11" db="EMBL/GenBank/DDBJ databases">
        <authorList>
            <consortium name="The German cDNA consortium"/>
        </authorList>
    </citation>
    <scope>NUCLEOTIDE SEQUENCE [LARGE SCALE MRNA]</scope>
    <source>
        <tissue>Brain cortex</tissue>
    </source>
</reference>
<name>RTF1_PONAB</name>
<gene>
    <name type="primary">RTF1</name>
</gene>
<protein>
    <recommendedName>
        <fullName>RNA polymerase-associated protein RTF1 homolog</fullName>
    </recommendedName>
</protein>
<evidence type="ECO:0000250" key="1"/>
<evidence type="ECO:0000250" key="2">
    <source>
        <dbReference type="UniProtKB" id="A2AQ19"/>
    </source>
</evidence>
<evidence type="ECO:0000250" key="3">
    <source>
        <dbReference type="UniProtKB" id="Q92541"/>
    </source>
</evidence>
<evidence type="ECO:0000255" key="4"/>
<evidence type="ECO:0000255" key="5">
    <source>
        <dbReference type="PROSITE-ProRule" id="PRU00693"/>
    </source>
</evidence>
<evidence type="ECO:0000256" key="6">
    <source>
        <dbReference type="SAM" id="MobiDB-lite"/>
    </source>
</evidence>
<evidence type="ECO:0000305" key="7"/>
<dbReference type="EMBL" id="CR859083">
    <property type="protein sequence ID" value="CAH91275.1"/>
    <property type="status" value="ALT_INIT"/>
    <property type="molecule type" value="mRNA"/>
</dbReference>
<dbReference type="BMRB" id="Q5RAD5"/>
<dbReference type="SMR" id="Q5RAD5"/>
<dbReference type="STRING" id="9601.ENSPPYP00000007219"/>
<dbReference type="eggNOG" id="KOG2402">
    <property type="taxonomic scope" value="Eukaryota"/>
</dbReference>
<dbReference type="InParanoid" id="Q5RAD5"/>
<dbReference type="Proteomes" id="UP000001595">
    <property type="component" value="Unplaced"/>
</dbReference>
<dbReference type="GO" id="GO:0016593">
    <property type="term" value="C:Cdc73/Paf1 complex"/>
    <property type="evidence" value="ECO:0000250"/>
    <property type="project" value="UniProtKB"/>
</dbReference>
<dbReference type="GO" id="GO:1990269">
    <property type="term" value="F:RNA polymerase II C-terminal domain phosphoserine binding"/>
    <property type="evidence" value="ECO:0007669"/>
    <property type="project" value="TreeGrafter"/>
</dbReference>
<dbReference type="GO" id="GO:0003697">
    <property type="term" value="F:single-stranded DNA binding"/>
    <property type="evidence" value="ECO:0000250"/>
    <property type="project" value="UniProtKB"/>
</dbReference>
<dbReference type="GO" id="GO:0001711">
    <property type="term" value="P:endodermal cell fate commitment"/>
    <property type="evidence" value="ECO:0000250"/>
    <property type="project" value="UniProtKB"/>
</dbReference>
<dbReference type="GO" id="GO:0000122">
    <property type="term" value="P:negative regulation of transcription by RNA polymerase II"/>
    <property type="evidence" value="ECO:0000250"/>
    <property type="project" value="UniProtKB"/>
</dbReference>
<dbReference type="GO" id="GO:0019827">
    <property type="term" value="P:stem cell population maintenance"/>
    <property type="evidence" value="ECO:0000250"/>
    <property type="project" value="UniProtKB"/>
</dbReference>
<dbReference type="GO" id="GO:0006368">
    <property type="term" value="P:transcription elongation by RNA polymerase II"/>
    <property type="evidence" value="ECO:0000250"/>
    <property type="project" value="UniProtKB"/>
</dbReference>
<dbReference type="GO" id="GO:0016055">
    <property type="term" value="P:Wnt signaling pathway"/>
    <property type="evidence" value="ECO:0007669"/>
    <property type="project" value="UniProtKB-KW"/>
</dbReference>
<dbReference type="FunFam" id="3.90.70.200:FF:000001">
    <property type="entry name" value="RNA polymerase-associated protein RTF1 homolog"/>
    <property type="match status" value="1"/>
</dbReference>
<dbReference type="Gene3D" id="3.90.70.200">
    <property type="entry name" value="Plus-3 domain"/>
    <property type="match status" value="1"/>
</dbReference>
<dbReference type="InterPro" id="IPR004343">
    <property type="entry name" value="Plus-3_dom"/>
</dbReference>
<dbReference type="InterPro" id="IPR036128">
    <property type="entry name" value="Plus3-like_sf"/>
</dbReference>
<dbReference type="PANTHER" id="PTHR13115">
    <property type="entry name" value="RNA POLYMERASE-ASSOCIATED PROTEIN RTF1 HOMOLOG"/>
    <property type="match status" value="1"/>
</dbReference>
<dbReference type="PANTHER" id="PTHR13115:SF8">
    <property type="entry name" value="RNA POLYMERASE-ASSOCIATED PROTEIN RTF1 HOMOLOG"/>
    <property type="match status" value="1"/>
</dbReference>
<dbReference type="Pfam" id="PF03126">
    <property type="entry name" value="Plus-3"/>
    <property type="match status" value="1"/>
</dbReference>
<dbReference type="SMART" id="SM00719">
    <property type="entry name" value="Plus3"/>
    <property type="match status" value="1"/>
</dbReference>
<dbReference type="SUPFAM" id="SSF159042">
    <property type="entry name" value="Plus3-like"/>
    <property type="match status" value="1"/>
</dbReference>
<dbReference type="PROSITE" id="PS51360">
    <property type="entry name" value="PLUS3"/>
    <property type="match status" value="1"/>
</dbReference>
<feature type="chain" id="PRO_0000255937" description="RNA polymerase-associated protein RTF1 homolog">
    <location>
        <begin position="1" status="less than"/>
        <end position="665" status="greater than"/>
    </location>
</feature>
<feature type="domain" description="Plus3" evidence="5">
    <location>
        <begin position="348"/>
        <end position="479"/>
    </location>
</feature>
<feature type="region of interest" description="Disordered" evidence="6">
    <location>
        <begin position="1"/>
        <end position="208"/>
    </location>
</feature>
<feature type="region of interest" description="Disordered" evidence="6">
    <location>
        <begin position="223"/>
        <end position="352"/>
    </location>
</feature>
<feature type="region of interest" description="Disordered" evidence="6">
    <location>
        <begin position="622"/>
        <end position="647"/>
    </location>
</feature>
<feature type="coiled-coil region" evidence="4">
    <location>
        <begin position="521"/>
        <end position="555"/>
    </location>
</feature>
<feature type="compositionally biased region" description="Low complexity" evidence="6">
    <location>
        <begin position="1"/>
        <end position="14"/>
    </location>
</feature>
<feature type="compositionally biased region" description="Gly residues" evidence="6">
    <location>
        <begin position="19"/>
        <end position="28"/>
    </location>
</feature>
<feature type="compositionally biased region" description="Acidic residues" evidence="6">
    <location>
        <begin position="48"/>
        <end position="60"/>
    </location>
</feature>
<feature type="compositionally biased region" description="Basic residues" evidence="6">
    <location>
        <begin position="105"/>
        <end position="125"/>
    </location>
</feature>
<feature type="compositionally biased region" description="Low complexity" evidence="6">
    <location>
        <begin position="153"/>
        <end position="165"/>
    </location>
</feature>
<feature type="compositionally biased region" description="Basic and acidic residues" evidence="6">
    <location>
        <begin position="187"/>
        <end position="208"/>
    </location>
</feature>
<feature type="compositionally biased region" description="Basic residues" evidence="6">
    <location>
        <begin position="223"/>
        <end position="235"/>
    </location>
</feature>
<feature type="compositionally biased region" description="Basic and acidic residues" evidence="6">
    <location>
        <begin position="236"/>
        <end position="246"/>
    </location>
</feature>
<feature type="compositionally biased region" description="Basic and acidic residues" evidence="6">
    <location>
        <begin position="264"/>
        <end position="286"/>
    </location>
</feature>
<feature type="compositionally biased region" description="Acidic residues" evidence="6">
    <location>
        <begin position="307"/>
        <end position="318"/>
    </location>
</feature>
<feature type="compositionally biased region" description="Basic and acidic residues" evidence="6">
    <location>
        <begin position="627"/>
        <end position="642"/>
    </location>
</feature>
<feature type="modified residue" description="Phosphoserine" evidence="3">
    <location>
        <position position="48"/>
    </location>
</feature>
<feature type="modified residue" description="Phosphothreonine" evidence="3">
    <location>
        <position position="50"/>
    </location>
</feature>
<feature type="modified residue" description="Phosphoserine" evidence="3">
    <location>
        <position position="621"/>
    </location>
</feature>
<feature type="modified residue" description="Phosphoserine" evidence="3">
    <location>
        <position position="645"/>
    </location>
</feature>
<feature type="modified residue" description="Phosphoserine" evidence="3">
    <location>
        <position position="650"/>
    </location>
</feature>
<feature type="non-terminal residue">
    <location>
        <position position="1"/>
    </location>
</feature>
<feature type="non-terminal residue">
    <location>
        <position position="665"/>
    </location>
</feature>
<accession>Q5RAD5</accession>
<comment type="function">
    <text evidence="1">Component of the PAF1 complex (PAF1C) which has multiple functions during transcription by RNA polymerase II and is implicated in regulation of development and maintenance of embryonic stem cell pluripotency. PAF1C associates with RNA polymerase II through interaction with POLR2A CTD non-phosphorylated and 'Ser-2'- and 'Ser-5'-phosphorylated forms and is involved in transcriptional elongation, acting both independently and synergistically with TCEA1 and in cooperation with the DSIF complex and HTATSF1. PAF1C is required for transcription of Hox and Wnt target genes. PAF1C is involved in hematopoiesis and stimulates transcriptional activity of KMT2A/MLL1. PAF1C is involved in histone modifications such as ubiquitination of histone H2B and methylation on histone H3 'Lys-4' (H3K4me3). PAF1C recruits the RNF20/40 E3 ubiquitin-protein ligase complex and the E2 enzyme UBE2A or UBE2B to chromatin which mediate monoubiquitination of 'Lys-120' of histone H2B (H2BK120ub1); UB2A/B-mediated H2B ubiquitination is proposed to be coupled to transcription. PAF1C is involved in mRNA 3' end formation probably through association with cleavage and poly(A) factors. Binds single-stranded DNA. Required for maximal induction of heat-shock genes. Required for the trimethylation of histone H3 'Lys-4' (H3K4me3) on genes involved in stem cell pluripotency; this function is synergistic with CXXC1 indicative for an involvement of a SET1 complex (By similarity).</text>
</comment>
<comment type="subunit">
    <text evidence="2 3">Component of the PAF1 complex, which consists of CDC73, PAF1, LEO1, CTR9, RTF1 and WDR61 (By similarity). The PAF1 complex interacts with PHF5A (By similarity).</text>
</comment>
<comment type="subcellular location">
    <subcellularLocation>
        <location evidence="1">Nucleus</location>
        <location evidence="1">Nucleoplasm</location>
    </subcellularLocation>
</comment>
<comment type="domain">
    <text>The Plus3 domain mediates single-stranded DNA-binding.</text>
</comment>
<comment type="sequence caution" evidence="7">
    <conflict type="erroneous initiation">
        <sequence resource="EMBL-CDS" id="CAH91275"/>
    </conflict>
    <text>Truncated N-terminus.</text>
</comment>